<protein>
    <recommendedName>
        <fullName>Gag-Pol polyprotein</fullName>
    </recommendedName>
    <alternativeName>
        <fullName>Pr170Gag-Pol</fullName>
    </alternativeName>
    <component>
        <recommendedName>
            <fullName>Matrix protein p16</fullName>
            <shortName>MA</shortName>
        </recommendedName>
    </component>
    <component>
        <recommendedName>
            <fullName>Capsid protein p26</fullName>
            <shortName>CA</shortName>
        </recommendedName>
    </component>
    <component>
        <recommendedName>
            <fullName>Transframe peptide</fullName>
        </recommendedName>
        <alternativeName>
            <fullName>p11</fullName>
        </alternativeName>
    </component>
    <component>
        <recommendedName>
            <fullName>Protease</fullName>
            <ecNumber>3.4.23.-</ecNumber>
        </recommendedName>
        <alternativeName>
            <fullName>P119</fullName>
        </alternativeName>
        <alternativeName>
            <fullName>Retropepsin</fullName>
        </alternativeName>
    </component>
    <component>
        <recommendedName>
            <fullName>Reverse transcriptase/ribonuclease H</fullName>
            <shortName>RT</shortName>
            <ecNumber>2.7.7.49</ecNumber>
            <ecNumber>2.7.7.7</ecNumber>
            <ecNumber>3.1.26.13</ecNumber>
        </recommendedName>
        <alternativeName>
            <fullName>Exoribonuclease H</fullName>
            <ecNumber>3.1.13.2</ecNumber>
        </alternativeName>
        <alternativeName>
            <fullName>P72</fullName>
        </alternativeName>
    </component>
    <component>
        <recommendedName>
            <fullName>Integrase</fullName>
            <shortName>IN</shortName>
            <ecNumber evidence="2">2.7.7.-</ecNumber>
            <ecNumber evidence="2">3.1.-.-</ecNumber>
        </recommendedName>
    </component>
</protein>
<reference key="1">
    <citation type="journal article" date="1995" name="J. Gen. Virol.">
        <title>Nucleotide sequence analysis of Jembrana disease virus: a bovine lentivirus associated with an acute disease syndrome.</title>
        <authorList>
            <person name="Chadwick B.J."/>
            <person name="Coelen R.J."/>
            <person name="Wilcox G.E."/>
            <person name="Sammels L.M."/>
            <person name="Kertayadnya G."/>
        </authorList>
    </citation>
    <scope>NUCLEOTIDE SEQUENCE [GENOMIC RNA]</scope>
    <source>
        <strain>Tabanan/87</strain>
    </source>
</reference>
<reference key="2">
    <citation type="journal article" date="1995" name="J. Gen. Virol.">
        <title>Genomic sequence analysis identifies Jembrana disease virus as a new bovine lentivirus.</title>
        <authorList>
            <person name="Chadwick B.J."/>
            <person name="Coelen R.J."/>
            <person name="Sammels L.M."/>
            <person name="Kertayadnya G."/>
            <person name="Wilcox G.E."/>
        </authorList>
    </citation>
    <scope>NUCLEOTIDE SEQUENCE [GENOMIC RNA] OF 562-760</scope>
    <source>
        <strain>Tabanan/87</strain>
    </source>
</reference>
<name>POL_JEMBR</name>
<gene>
    <name type="primary">gag-pol</name>
</gene>
<dbReference type="EC" id="3.4.23.-"/>
<dbReference type="EC" id="2.7.7.49"/>
<dbReference type="EC" id="2.7.7.7"/>
<dbReference type="EC" id="3.1.26.13"/>
<dbReference type="EC" id="3.1.13.2"/>
<dbReference type="EC" id="2.7.7.-" evidence="2"/>
<dbReference type="EC" id="3.1.-.-" evidence="2"/>
<dbReference type="EMBL" id="U21603">
    <property type="protein sequence ID" value="AAA64389.1"/>
    <property type="molecule type" value="Genomic_RNA"/>
</dbReference>
<dbReference type="EMBL" id="L32870">
    <property type="protein sequence ID" value="AAA64521.1"/>
    <property type="molecule type" value="Genomic_RNA"/>
</dbReference>
<dbReference type="RefSeq" id="NP_042683.1">
    <molecule id="Q82851-1"/>
    <property type="nucleotide sequence ID" value="NC_001654.1"/>
</dbReference>
<dbReference type="SMR" id="Q82851"/>
<dbReference type="GeneID" id="1497400"/>
<dbReference type="Proteomes" id="UP000242339">
    <property type="component" value="Genome"/>
</dbReference>
<dbReference type="Proteomes" id="UP000246436">
    <property type="component" value="Genome"/>
</dbReference>
<dbReference type="GO" id="GO:0019013">
    <property type="term" value="C:viral nucleocapsid"/>
    <property type="evidence" value="ECO:0007669"/>
    <property type="project" value="UniProtKB-KW"/>
</dbReference>
<dbReference type="GO" id="GO:0004190">
    <property type="term" value="F:aspartic-type endopeptidase activity"/>
    <property type="evidence" value="ECO:0007669"/>
    <property type="project" value="UniProtKB-KW"/>
</dbReference>
<dbReference type="GO" id="GO:0003677">
    <property type="term" value="F:DNA binding"/>
    <property type="evidence" value="ECO:0007669"/>
    <property type="project" value="UniProtKB-KW"/>
</dbReference>
<dbReference type="GO" id="GO:0003887">
    <property type="term" value="F:DNA-directed DNA polymerase activity"/>
    <property type="evidence" value="ECO:0007669"/>
    <property type="project" value="UniProtKB-KW"/>
</dbReference>
<dbReference type="GO" id="GO:0004533">
    <property type="term" value="F:exoribonuclease H activity"/>
    <property type="evidence" value="ECO:0007669"/>
    <property type="project" value="UniProtKB-EC"/>
</dbReference>
<dbReference type="GO" id="GO:0035613">
    <property type="term" value="F:RNA stem-loop binding"/>
    <property type="evidence" value="ECO:0007669"/>
    <property type="project" value="TreeGrafter"/>
</dbReference>
<dbReference type="GO" id="GO:0003964">
    <property type="term" value="F:RNA-directed DNA polymerase activity"/>
    <property type="evidence" value="ECO:0007669"/>
    <property type="project" value="UniProtKB-KW"/>
</dbReference>
<dbReference type="GO" id="GO:0004523">
    <property type="term" value="F:RNA-DNA hybrid ribonuclease activity"/>
    <property type="evidence" value="ECO:0007669"/>
    <property type="project" value="InterPro"/>
</dbReference>
<dbReference type="GO" id="GO:0039660">
    <property type="term" value="F:structural constituent of virion"/>
    <property type="evidence" value="ECO:0007669"/>
    <property type="project" value="UniProtKB-KW"/>
</dbReference>
<dbReference type="GO" id="GO:0008270">
    <property type="term" value="F:zinc ion binding"/>
    <property type="evidence" value="ECO:0007669"/>
    <property type="project" value="UniProtKB-KW"/>
</dbReference>
<dbReference type="GO" id="GO:0015074">
    <property type="term" value="P:DNA integration"/>
    <property type="evidence" value="ECO:0007669"/>
    <property type="project" value="UniProtKB-KW"/>
</dbReference>
<dbReference type="GO" id="GO:0006310">
    <property type="term" value="P:DNA recombination"/>
    <property type="evidence" value="ECO:0007669"/>
    <property type="project" value="UniProtKB-KW"/>
</dbReference>
<dbReference type="GO" id="GO:0075713">
    <property type="term" value="P:establishment of integrated proviral latency"/>
    <property type="evidence" value="ECO:0007669"/>
    <property type="project" value="UniProtKB-KW"/>
</dbReference>
<dbReference type="GO" id="GO:0006508">
    <property type="term" value="P:proteolysis"/>
    <property type="evidence" value="ECO:0007669"/>
    <property type="project" value="UniProtKB-KW"/>
</dbReference>
<dbReference type="GO" id="GO:0046718">
    <property type="term" value="P:symbiont entry into host cell"/>
    <property type="evidence" value="ECO:0007669"/>
    <property type="project" value="UniProtKB-KW"/>
</dbReference>
<dbReference type="GO" id="GO:0044826">
    <property type="term" value="P:viral genome integration into host DNA"/>
    <property type="evidence" value="ECO:0007669"/>
    <property type="project" value="UniProtKB-KW"/>
</dbReference>
<dbReference type="GO" id="GO:0075523">
    <property type="term" value="P:viral translational frameshifting"/>
    <property type="evidence" value="ECO:0007669"/>
    <property type="project" value="UniProtKB-KW"/>
</dbReference>
<dbReference type="Gene3D" id="1.10.10.200">
    <property type="match status" value="1"/>
</dbReference>
<dbReference type="Gene3D" id="1.10.1200.30">
    <property type="match status" value="1"/>
</dbReference>
<dbReference type="Gene3D" id="3.30.70.270">
    <property type="match status" value="3"/>
</dbReference>
<dbReference type="Gene3D" id="2.40.70.10">
    <property type="entry name" value="Acid Proteases"/>
    <property type="match status" value="1"/>
</dbReference>
<dbReference type="Gene3D" id="3.10.10.10">
    <property type="entry name" value="HIV Type 1 Reverse Transcriptase, subunit A, domain 1"/>
    <property type="match status" value="1"/>
</dbReference>
<dbReference type="Gene3D" id="1.10.375.10">
    <property type="entry name" value="Human Immunodeficiency Virus Type 1 Capsid Protein"/>
    <property type="match status" value="1"/>
</dbReference>
<dbReference type="Gene3D" id="1.10.150.90">
    <property type="entry name" value="Immunodeficiency lentiviruses, gag gene matrix protein p17"/>
    <property type="match status" value="1"/>
</dbReference>
<dbReference type="Gene3D" id="2.30.30.10">
    <property type="entry name" value="Integrase, C-terminal domain superfamily, retroviral"/>
    <property type="match status" value="1"/>
</dbReference>
<dbReference type="Gene3D" id="3.30.420.10">
    <property type="entry name" value="Ribonuclease H-like superfamily/Ribonuclease H"/>
    <property type="match status" value="2"/>
</dbReference>
<dbReference type="Gene3D" id="4.10.60.10">
    <property type="entry name" value="Zinc finger, CCHC-type"/>
    <property type="match status" value="1"/>
</dbReference>
<dbReference type="InterPro" id="IPR001969">
    <property type="entry name" value="Aspartic_peptidase_AS"/>
</dbReference>
<dbReference type="InterPro" id="IPR043502">
    <property type="entry name" value="DNA/RNA_pol_sf"/>
</dbReference>
<dbReference type="InterPro" id="IPR045345">
    <property type="entry name" value="Gag_p24_C"/>
</dbReference>
<dbReference type="InterPro" id="IPR017856">
    <property type="entry name" value="Integrase-like_N"/>
</dbReference>
<dbReference type="InterPro" id="IPR036862">
    <property type="entry name" value="Integrase_C_dom_sf_retrovir"/>
</dbReference>
<dbReference type="InterPro" id="IPR001037">
    <property type="entry name" value="Integrase_C_retrovir"/>
</dbReference>
<dbReference type="InterPro" id="IPR001584">
    <property type="entry name" value="Integrase_cat-core"/>
</dbReference>
<dbReference type="InterPro" id="IPR003308">
    <property type="entry name" value="Integrase_Zn-bd_dom_N"/>
</dbReference>
<dbReference type="InterPro" id="IPR012344">
    <property type="entry name" value="Matrix_HIV/RSV_N"/>
</dbReference>
<dbReference type="InterPro" id="IPR001995">
    <property type="entry name" value="Peptidase_A2_cat"/>
</dbReference>
<dbReference type="InterPro" id="IPR021109">
    <property type="entry name" value="Peptidase_aspartic_dom_sf"/>
</dbReference>
<dbReference type="InterPro" id="IPR018061">
    <property type="entry name" value="Retropepsins"/>
</dbReference>
<dbReference type="InterPro" id="IPR008916">
    <property type="entry name" value="Retrov_capsid_C"/>
</dbReference>
<dbReference type="InterPro" id="IPR008919">
    <property type="entry name" value="Retrov_capsid_N"/>
</dbReference>
<dbReference type="InterPro" id="IPR043128">
    <property type="entry name" value="Rev_trsase/Diguanyl_cyclase"/>
</dbReference>
<dbReference type="InterPro" id="IPR012337">
    <property type="entry name" value="RNaseH-like_sf"/>
</dbReference>
<dbReference type="InterPro" id="IPR002156">
    <property type="entry name" value="RNaseH_domain"/>
</dbReference>
<dbReference type="InterPro" id="IPR036397">
    <property type="entry name" value="RNaseH_sf"/>
</dbReference>
<dbReference type="InterPro" id="IPR000477">
    <property type="entry name" value="RT_dom"/>
</dbReference>
<dbReference type="InterPro" id="IPR010661">
    <property type="entry name" value="RVT_thumb"/>
</dbReference>
<dbReference type="InterPro" id="IPR001878">
    <property type="entry name" value="Znf_CCHC"/>
</dbReference>
<dbReference type="InterPro" id="IPR036875">
    <property type="entry name" value="Znf_CCHC_sf"/>
</dbReference>
<dbReference type="PANTHER" id="PTHR41694">
    <property type="entry name" value="ENDOGENOUS RETROVIRUS GROUP K MEMBER POL PROTEIN"/>
    <property type="match status" value="1"/>
</dbReference>
<dbReference type="PANTHER" id="PTHR41694:SF3">
    <property type="entry name" value="RNA-DIRECTED DNA POLYMERASE-RELATED"/>
    <property type="match status" value="1"/>
</dbReference>
<dbReference type="Pfam" id="PF19317">
    <property type="entry name" value="Gag_p24_C"/>
    <property type="match status" value="1"/>
</dbReference>
<dbReference type="Pfam" id="PF00552">
    <property type="entry name" value="IN_DBD_C"/>
    <property type="match status" value="1"/>
</dbReference>
<dbReference type="Pfam" id="PF02022">
    <property type="entry name" value="Integrase_Zn"/>
    <property type="match status" value="1"/>
</dbReference>
<dbReference type="Pfam" id="PF00075">
    <property type="entry name" value="RNase_H"/>
    <property type="match status" value="1"/>
</dbReference>
<dbReference type="Pfam" id="PF00665">
    <property type="entry name" value="rve"/>
    <property type="match status" value="1"/>
</dbReference>
<dbReference type="Pfam" id="PF00077">
    <property type="entry name" value="RVP"/>
    <property type="match status" value="1"/>
</dbReference>
<dbReference type="Pfam" id="PF00078">
    <property type="entry name" value="RVT_1"/>
    <property type="match status" value="1"/>
</dbReference>
<dbReference type="Pfam" id="PF06817">
    <property type="entry name" value="RVT_thumb"/>
    <property type="match status" value="1"/>
</dbReference>
<dbReference type="Pfam" id="PF00098">
    <property type="entry name" value="zf-CCHC"/>
    <property type="match status" value="2"/>
</dbReference>
<dbReference type="SMART" id="SM00343">
    <property type="entry name" value="ZnF_C2HC"/>
    <property type="match status" value="2"/>
</dbReference>
<dbReference type="SUPFAM" id="SSF50630">
    <property type="entry name" value="Acid proteases"/>
    <property type="match status" value="1"/>
</dbReference>
<dbReference type="SUPFAM" id="SSF50122">
    <property type="entry name" value="DNA-binding domain of retroviral integrase"/>
    <property type="match status" value="1"/>
</dbReference>
<dbReference type="SUPFAM" id="SSF56672">
    <property type="entry name" value="DNA/RNA polymerases"/>
    <property type="match status" value="1"/>
</dbReference>
<dbReference type="SUPFAM" id="SSF46919">
    <property type="entry name" value="N-terminal Zn binding domain of HIV integrase"/>
    <property type="match status" value="1"/>
</dbReference>
<dbReference type="SUPFAM" id="SSF47353">
    <property type="entry name" value="Retrovirus capsid dimerization domain-like"/>
    <property type="match status" value="1"/>
</dbReference>
<dbReference type="SUPFAM" id="SSF47943">
    <property type="entry name" value="Retrovirus capsid protein, N-terminal core domain"/>
    <property type="match status" value="1"/>
</dbReference>
<dbReference type="SUPFAM" id="SSF57756">
    <property type="entry name" value="Retrovirus zinc finger-like domains"/>
    <property type="match status" value="1"/>
</dbReference>
<dbReference type="SUPFAM" id="SSF53098">
    <property type="entry name" value="Ribonuclease H-like"/>
    <property type="match status" value="2"/>
</dbReference>
<dbReference type="PROSITE" id="PS50175">
    <property type="entry name" value="ASP_PROT_RETROV"/>
    <property type="match status" value="1"/>
</dbReference>
<dbReference type="PROSITE" id="PS00141">
    <property type="entry name" value="ASP_PROTEASE"/>
    <property type="match status" value="1"/>
</dbReference>
<dbReference type="PROSITE" id="PS50994">
    <property type="entry name" value="INTEGRASE"/>
    <property type="match status" value="1"/>
</dbReference>
<dbReference type="PROSITE" id="PS51027">
    <property type="entry name" value="INTEGRASE_DBD"/>
    <property type="match status" value="1"/>
</dbReference>
<dbReference type="PROSITE" id="PS50879">
    <property type="entry name" value="RNASE_H_1"/>
    <property type="match status" value="1"/>
</dbReference>
<dbReference type="PROSITE" id="PS50878">
    <property type="entry name" value="RT_POL"/>
    <property type="match status" value="1"/>
</dbReference>
<dbReference type="PROSITE" id="PS50158">
    <property type="entry name" value="ZF_CCHC"/>
    <property type="match status" value="2"/>
</dbReference>
<dbReference type="PROSITE" id="PS50876">
    <property type="entry name" value="ZF_INTEGRASE"/>
    <property type="match status" value="1"/>
</dbReference>
<evidence type="ECO:0000250" key="1"/>
<evidence type="ECO:0000250" key="2">
    <source>
        <dbReference type="UniProtKB" id="P04585"/>
    </source>
</evidence>
<evidence type="ECO:0000255" key="3"/>
<evidence type="ECO:0000255" key="4">
    <source>
        <dbReference type="PROSITE-ProRule" id="PRU00047"/>
    </source>
</evidence>
<evidence type="ECO:0000255" key="5">
    <source>
        <dbReference type="PROSITE-ProRule" id="PRU00275"/>
    </source>
</evidence>
<evidence type="ECO:0000255" key="6">
    <source>
        <dbReference type="PROSITE-ProRule" id="PRU00405"/>
    </source>
</evidence>
<evidence type="ECO:0000255" key="7">
    <source>
        <dbReference type="PROSITE-ProRule" id="PRU00408"/>
    </source>
</evidence>
<evidence type="ECO:0000255" key="8">
    <source>
        <dbReference type="PROSITE-ProRule" id="PRU00450"/>
    </source>
</evidence>
<evidence type="ECO:0000255" key="9">
    <source>
        <dbReference type="PROSITE-ProRule" id="PRU00457"/>
    </source>
</evidence>
<evidence type="ECO:0000255" key="10">
    <source>
        <dbReference type="PROSITE-ProRule" id="PRU00506"/>
    </source>
</evidence>
<evidence type="ECO:0000255" key="11">
    <source>
        <dbReference type="PROSITE-ProRule" id="PRU10094"/>
    </source>
</evidence>
<evidence type="ECO:0000305" key="12"/>
<accession>Q82851</accession>
<accession>Q82859</accession>
<organism>
    <name type="scientific">Jembrana disease virus</name>
    <name type="common">JDV</name>
    <dbReference type="NCBI Taxonomy" id="36370"/>
    <lineage>
        <taxon>Viruses</taxon>
        <taxon>Riboviria</taxon>
        <taxon>Pararnavirae</taxon>
        <taxon>Artverviricota</taxon>
        <taxon>Revtraviricetes</taxon>
        <taxon>Ortervirales</taxon>
        <taxon>Retroviridae</taxon>
        <taxon>Orthoretrovirinae</taxon>
        <taxon>Lentivirus</taxon>
    </lineage>
</organism>
<comment type="function">
    <text evidence="1">Matrix protein p16 forms the outer shell of the core of the virus, lining the inner surface of the viral membrane.</text>
</comment>
<comment type="function">
    <text evidence="1">Capsid protein p26 forms the conical core of the virus that encapsulates the genomic RNA-nucleocapsid complex.</text>
</comment>
<comment type="function">
    <text evidence="5">The aspartyl protease mediates proteolytic cleavages of Gag and Gag-Pol polyproteins during or shortly after the release of the virion from the plasma membrane. Cleavages take place as an ordered, step-wise cascade to yield mature proteins. This process is called maturation. Displays maximal activity during the budding process just prior to particle release from the cell.</text>
</comment>
<comment type="function">
    <text evidence="1">Reverse transcriptase/ribonuclease H (RT) is a multifunctional enzyme that converts the viral RNA genome into dsDNA in the cytoplasm, shortly after virus entry into the cell. This enzyme displays a DNA polymerase activity that can copy either DNA or RNA templates, and a ribonuclease H (RNase H) activity that cleaves the RNA strand of RNA-DNA heteroduplexes in a partially processive 3' to 5' endonucleasic mode. Conversion of viral genomic RNA into dsDNA requires many steps. A tRNA binds to the primer-binding site (PBS) situated at the 5'-end of the viral RNA. RT uses the 3' end of the tRNA primer to perform a short round of RNA-dependent minus-strand DNA synthesis. The reading proceeds through the U5 region and ends after the repeated (R) region which is present at both ends of viral RNA. The portion of the RNA-DNA heteroduplex is digested by the RNase H, resulting in a ssDNA product attached to the tRNA primer. This ssDNA/tRNA hybridizes with the identical R region situated at the 3' end of viral RNA. This template exchange, known as minus-strand DNA strong stop transfer, can be either intra- or intermolecular. RT uses the 3' end of this newly synthesized short ssDNA to perform the RNA-dependent minus-strand DNA synthesis of the whole template. RNase H digests the RNA template except for a polypurine tract (PPT) situated at the 5'-end of the genome. It is not clear if both polymerase and RNase H activities are simultaneous. RNase H probably can proceed both in a polymerase-dependent (RNA cut into small fragments by the same RT performing DNA synthesis) and a polymerase-independent mode (cleavage of remaining RNA fragments by free RTs). Secondly, RT performs DNA-directed plus-strand DNA synthesis using the PPT that has not been removed by RNase H as primer. PPT and tRNA primers are then removed by RNase H. The 3' and 5' ssDNA PBS regions hybridize to form a circular dsDNA intermediate. Strand displacement synthesis by RT to the PBS and PPT ends produces a blunt ended, linear dsDNA copy of the viral genome that includes long terminal repeats (LTRs) at both ends (By similarity).</text>
</comment>
<comment type="function">
    <text evidence="1">Integrase catalyzes viral DNA integration into the host chromosome, by performing a series of DNA cutting and joining reactions. This enzyme activity takes place after virion entry into a cell and reverse transcription of the RNA genome in dsDNA (By similarity).</text>
</comment>
<comment type="catalytic activity">
    <reaction evidence="6">
        <text>DNA(n) + a 2'-deoxyribonucleoside 5'-triphosphate = DNA(n+1) + diphosphate</text>
        <dbReference type="Rhea" id="RHEA:22508"/>
        <dbReference type="Rhea" id="RHEA-COMP:17339"/>
        <dbReference type="Rhea" id="RHEA-COMP:17340"/>
        <dbReference type="ChEBI" id="CHEBI:33019"/>
        <dbReference type="ChEBI" id="CHEBI:61560"/>
        <dbReference type="ChEBI" id="CHEBI:173112"/>
        <dbReference type="EC" id="2.7.7.49"/>
    </reaction>
</comment>
<comment type="catalytic activity">
    <reaction evidence="6">
        <text>DNA(n) + a 2'-deoxyribonucleoside 5'-triphosphate = DNA(n+1) + diphosphate</text>
        <dbReference type="Rhea" id="RHEA:22508"/>
        <dbReference type="Rhea" id="RHEA-COMP:17339"/>
        <dbReference type="Rhea" id="RHEA-COMP:17340"/>
        <dbReference type="ChEBI" id="CHEBI:33019"/>
        <dbReference type="ChEBI" id="CHEBI:61560"/>
        <dbReference type="ChEBI" id="CHEBI:173112"/>
        <dbReference type="EC" id="2.7.7.7"/>
    </reaction>
</comment>
<comment type="catalytic activity">
    <reaction>
        <text>Endohydrolysis of RNA in RNA/DNA hybrids. Three different cleavage modes: 1. sequence-specific internal cleavage of RNA. Human immunodeficiency virus type 1 and Moloney murine leukemia virus enzymes prefer to cleave the RNA strand one nucleotide away from the RNA-DNA junction. 2. RNA 5'-end directed cleavage 13-19 nucleotides from the RNA end. 3. DNA 3'-end directed cleavage 15-20 nucleotides away from the primer terminus.</text>
        <dbReference type="EC" id="3.1.26.13"/>
    </reaction>
</comment>
<comment type="catalytic activity">
    <reaction>
        <text>3'-end directed exonucleolytic cleavage of viral RNA-DNA hybrid.</text>
        <dbReference type="EC" id="3.1.13.2"/>
    </reaction>
</comment>
<comment type="subcellular location">
    <molecule>Matrix protein p16</molecule>
    <subcellularLocation>
        <location evidence="12">Virion</location>
    </subcellularLocation>
</comment>
<comment type="subcellular location">
    <molecule>Capsid protein p26</molecule>
    <subcellularLocation>
        <location evidence="12">Virion</location>
    </subcellularLocation>
</comment>
<comment type="alternative products">
    <event type="ribosomal frameshifting"/>
    <isoform>
        <id>Q82851-1</id>
        <name>Gag-Pol polyprotein</name>
        <sequence type="displayed"/>
    </isoform>
    <isoform>
        <id>Q82850-1</id>
        <name>Gag polyprotein</name>
        <sequence type="external"/>
    </isoform>
    <text>This strategy of translation probably allows the virus to modulate the quantity of each viral protein.</text>
</comment>
<comment type="PTM">
    <text evidence="1">Specific enzymatic cleavages by the viral protease yield mature proteins. The protease is released by autocatalytic cleavage. The polyprotein is cleaved during and after budding, this process is termed maturation (By similarity).</text>
</comment>
<comment type="miscellaneous">
    <text evidence="1">Gag proteins are synthesized on both gag and gag-pol polyproteins. Gag polyprotein (AC Q82850) is produced from conventional translation of the gag ORF. Gag-Pol polyprotein is generated by a -1 ribosomal frameshift occurring at the gag-pol genes boundary. This strategy of translation probably allows the virus to modulate the quantity of each viral protein (By similarity).</text>
</comment>
<comment type="miscellaneous">
    <text evidence="1">The reverse transcriptase is an error-prone enzyme that lacks a proof-reading function. High mutations rate is a direct consequence of this characteristic. RT also displays frequent template switching leading to high recombination rate. Recombination mostly occurs between homologous regions of the two copackaged RNA genomes. If these two RNA molecules derive from different viral strains, reverse transcription will give rise to highly recombinated proviral DNAs (By similarity).</text>
</comment>
<comment type="miscellaneous">
    <molecule>Isoform Gag-Pol polyprotein</molecule>
    <text>Produced by ribosomal frameshifting at the gag-pol genes boundary.</text>
</comment>
<feature type="chain" id="PRO_0000272353" description="Gag-Pol polyprotein">
    <location>
        <begin position="1"/>
        <end position="1432"/>
    </location>
</feature>
<feature type="chain" id="PRO_0000272354" description="Matrix protein p16" evidence="3">
    <location>
        <begin position="1"/>
        <end position="125"/>
    </location>
</feature>
<feature type="chain" id="PRO_0000272355" description="Capsid protein p26" evidence="3">
    <location>
        <begin position="126"/>
        <end position="351"/>
    </location>
</feature>
<feature type="chain" id="PRO_0000272356" description="Transframe peptide" evidence="3">
    <location>
        <begin position="352"/>
        <end position="432"/>
    </location>
</feature>
<feature type="chain" id="PRO_0000272357" description="Protease" evidence="3">
    <location>
        <begin position="433"/>
        <end position="522"/>
    </location>
</feature>
<feature type="chain" id="PRO_0000272358" description="Reverse transcriptase/ribonuclease H" evidence="3">
    <location>
        <begin position="523"/>
        <end position="1151"/>
    </location>
</feature>
<feature type="chain" id="PRO_0000272359" description="Integrase" evidence="3">
    <location>
        <begin position="1152"/>
        <end position="1432"/>
    </location>
</feature>
<feature type="domain" description="Peptidase A2" evidence="5">
    <location>
        <begin position="452"/>
        <end position="525"/>
    </location>
</feature>
<feature type="domain" description="Reverse transcriptase" evidence="6">
    <location>
        <begin position="579"/>
        <end position="766"/>
    </location>
</feature>
<feature type="domain" description="RNase H type-1" evidence="7">
    <location>
        <begin position="959"/>
        <end position="1079"/>
    </location>
</feature>
<feature type="domain" description="Integrase catalytic" evidence="9">
    <location>
        <begin position="1206"/>
        <end position="1358"/>
    </location>
</feature>
<feature type="zinc finger region" description="CCHC-type 1" evidence="4">
    <location>
        <begin position="368"/>
        <end position="385"/>
    </location>
</feature>
<feature type="zinc finger region" description="CCHC-type 2" evidence="4">
    <location>
        <begin position="386"/>
        <end position="403"/>
    </location>
</feature>
<feature type="zinc finger region" description="Integrase-type" evidence="8">
    <location>
        <begin position="1157"/>
        <end position="1198"/>
    </location>
</feature>
<feature type="DNA-binding region" description="Integrase-type" evidence="10">
    <location>
        <begin position="1376"/>
        <end position="1422"/>
    </location>
</feature>
<feature type="coiled-coil region" evidence="3">
    <location>
        <begin position="815"/>
        <end position="843"/>
    </location>
</feature>
<feature type="active site" description="For protease activity; shared with dimeric partner" evidence="11">
    <location>
        <position position="457"/>
    </location>
</feature>
<feature type="binding site" evidence="1">
    <location>
        <position position="645"/>
    </location>
    <ligand>
        <name>Mg(2+)</name>
        <dbReference type="ChEBI" id="CHEBI:18420"/>
        <label>1</label>
        <note>catalytic</note>
    </ligand>
</feature>
<feature type="binding site" evidence="1">
    <location>
        <position position="720"/>
    </location>
    <ligand>
        <name>Mg(2+)</name>
        <dbReference type="ChEBI" id="CHEBI:18420"/>
        <label>1</label>
        <note>catalytic</note>
    </ligand>
</feature>
<feature type="binding site" evidence="1">
    <location>
        <position position="721"/>
    </location>
    <ligand>
        <name>Mg(2+)</name>
        <dbReference type="ChEBI" id="CHEBI:18420"/>
        <label>1</label>
        <note>catalytic</note>
    </ligand>
</feature>
<feature type="binding site" evidence="7">
    <location>
        <position position="968"/>
    </location>
    <ligand>
        <name>Mg(2+)</name>
        <dbReference type="ChEBI" id="CHEBI:18420"/>
        <label>2</label>
    </ligand>
</feature>
<feature type="binding site" evidence="7">
    <location>
        <position position="999"/>
    </location>
    <ligand>
        <name>Mg(2+)</name>
        <dbReference type="ChEBI" id="CHEBI:18420"/>
        <label>2</label>
    </ligand>
</feature>
<feature type="binding site" evidence="7">
    <location>
        <position position="1019"/>
    </location>
    <ligand>
        <name>Mg(2+)</name>
        <dbReference type="ChEBI" id="CHEBI:18420"/>
        <label>2</label>
    </ligand>
</feature>
<feature type="binding site" evidence="7">
    <location>
        <position position="1071"/>
    </location>
    <ligand>
        <name>Mg(2+)</name>
        <dbReference type="ChEBI" id="CHEBI:18420"/>
        <label>2</label>
    </ligand>
</feature>
<feature type="binding site" evidence="8">
    <location>
        <position position="1166"/>
    </location>
    <ligand>
        <name>Zn(2+)</name>
        <dbReference type="ChEBI" id="CHEBI:29105"/>
    </ligand>
</feature>
<feature type="binding site" evidence="8">
    <location>
        <position position="1170"/>
    </location>
    <ligand>
        <name>Zn(2+)</name>
        <dbReference type="ChEBI" id="CHEBI:29105"/>
    </ligand>
</feature>
<feature type="binding site" evidence="8">
    <location>
        <position position="1194"/>
    </location>
    <ligand>
        <name>Zn(2+)</name>
        <dbReference type="ChEBI" id="CHEBI:29105"/>
    </ligand>
</feature>
<feature type="binding site" evidence="8">
    <location>
        <position position="1197"/>
    </location>
    <ligand>
        <name>Zn(2+)</name>
        <dbReference type="ChEBI" id="CHEBI:29105"/>
    </ligand>
</feature>
<feature type="binding site" evidence="1">
    <location>
        <position position="1219"/>
    </location>
    <ligand>
        <name>Mg(2+)</name>
        <dbReference type="ChEBI" id="CHEBI:18420"/>
        <label>3</label>
        <note>catalytic</note>
    </ligand>
</feature>
<feature type="binding site" evidence="1">
    <location>
        <position position="1271"/>
    </location>
    <ligand>
        <name>Mg(2+)</name>
        <dbReference type="ChEBI" id="CHEBI:18420"/>
        <label>3</label>
        <note>catalytic</note>
    </ligand>
</feature>
<feature type="site" description="Cleavage; by viral protease" evidence="3">
    <location>
        <begin position="125"/>
        <end position="126"/>
    </location>
</feature>
<feature type="site" description="Cleavage; by viral protease" evidence="3">
    <location>
        <begin position="351"/>
        <end position="352"/>
    </location>
</feature>
<feature type="site" description="Cleavage; by viral protease" evidence="3">
    <location>
        <begin position="432"/>
        <end position="433"/>
    </location>
</feature>
<feature type="site" description="Cleavage; by viral protease" evidence="3">
    <location>
        <begin position="522"/>
        <end position="523"/>
    </location>
</feature>
<feature type="site" description="Cleavage; by viral protease" evidence="3">
    <location>
        <begin position="1151"/>
        <end position="1152"/>
    </location>
</feature>
<proteinExistence type="inferred from homology"/>
<keyword id="KW-0064">Aspartyl protease</keyword>
<keyword id="KW-0167">Capsid protein</keyword>
<keyword id="KW-0175">Coiled coil</keyword>
<keyword id="KW-0229">DNA integration</keyword>
<keyword id="KW-0233">DNA recombination</keyword>
<keyword id="KW-0238">DNA-binding</keyword>
<keyword id="KW-0239">DNA-directed DNA polymerase</keyword>
<keyword id="KW-0255">Endonuclease</keyword>
<keyword id="KW-0378">Hydrolase</keyword>
<keyword id="KW-0460">Magnesium</keyword>
<keyword id="KW-0479">Metal-binding</keyword>
<keyword id="KW-0511">Multifunctional enzyme</keyword>
<keyword id="KW-0540">Nuclease</keyword>
<keyword id="KW-0548">Nucleotidyltransferase</keyword>
<keyword id="KW-0645">Protease</keyword>
<keyword id="KW-1185">Reference proteome</keyword>
<keyword id="KW-0677">Repeat</keyword>
<keyword id="KW-0688">Ribosomal frameshifting</keyword>
<keyword id="KW-0694">RNA-binding</keyword>
<keyword id="KW-0695">RNA-directed DNA polymerase</keyword>
<keyword id="KW-0808">Transferase</keyword>
<keyword id="KW-1179">Viral genome integration</keyword>
<keyword id="KW-0468">Viral matrix protein</keyword>
<keyword id="KW-0543">Viral nucleoprotein</keyword>
<keyword id="KW-1188">Viral release from host cell</keyword>
<keyword id="KW-0946">Virion</keyword>
<keyword id="KW-0917">Virion maturation</keyword>
<keyword id="KW-1160">Virus entry into host cell</keyword>
<keyword id="KW-0862">Zinc</keyword>
<keyword id="KW-0863">Zinc-finger</keyword>
<organismHost>
    <name type="scientific">Bos javanicus</name>
    <name type="common">Wild banteng</name>
    <dbReference type="NCBI Taxonomy" id="9906"/>
</organismHost>
<sequence length="1432" mass="163421">MKLSKLEKALKKVRVTPQRDDTYTIGNVLWAIRMCRLMGLDCCIDEATAAEVAILIGRFQSLDLQDSPLKGKDEKAILTTLKVLWSLLAGHHPENSDMAEKYWEAWTIRERESQKEEEGEITSIYPQLRKNFPAVSTSDGSPRYDPDLTKQLKIWADATEKHGVDHHAVNILGVITANLTQSEIRLLLQSTPQWRLDIQLIESKLNAREHAHRVWKESHPEAPKTDEIIGKGLTAAEQATLTTQECRDTYRQWVLEAALEVAQGKHDRPGPINIHQGPKEPYPEFVNKLVTALEGMAAPETTKQYLLDHLSVDHANEDCRAVLLPLGPSAPMERKLEACRAVGSSKQKMQFLAEAFAAINVKGDGEVQRCYGCGKPGHIRRDCKNQKCFKCGKPGHLQRNCKSKNREALLCPFWAEERIPSGEDFCDPVCSPVGIRLNRQPFIKIFLGGRWVRALIDTGADEVVLKDIHWDRIKGVPAASVVQVGVTGRNIARRKSNVEWRFKNRYGIVDVLFSNTPVNLLGRSVLQSIVTKFTLAAHTKQIQPLPVKLHGPGPRVPQWPLTLEKYKALKEIVEELLKDGKISRTPWDNPFNTPVFVIKKKGGSKWRMLMDFRALNKVTNKGQEFQIGLPYPPGIQQCEHITAIDIKDAYFTIPLDENFRQYTAFSVVPVNREGPLERYHWNVLPQGWVCSPAIYQTTTQEIIAEIKDRFPDIVLYQYMDDLLIGSDRPDHKRVVSEIREELGAYGFKTPEEKIQEEQVQWLGYELTPKRWRFQPRQIKIKKVVTVNELQQMIGNCVWVQPEVKIPLSPLSDLLKGKTDLKDKIKLTEEAIQCLETVNKRLKDPEWKERIKEGTELVVKIQLIPEGVVYDLLQDGNPIWGGVKGWDYNHANKIKKMLSIMKKLSRIVMIMTGREVSFLIPGDSEDWESALQRINTLTEIPEVKFYKHACRWTSVCGPVIERYPTYYTDGGKKGSKAAAAYWREGKIRREVFPGTNQQAELKAVLMALQDGPAKMNIITDSRYAFEGMREEPETWGREGLWKEIGEELRRKEYVGVSWVPGHKGIGGNTEVDQEVQKALQGPITVSLPQEILLEAGETKLVKTGIFWEGLRPCKLRPEEGLKLKGSLIDEELQLEITNTQNSRVGIRQGQTIGTCFIEAIPQAIEEHEKWHTTAEILAREFQLPRRVAREIVHRCQACKRTVSCPRRGTNPRERFLWQMDNTHLEGKIIWVAVETNSGLIEARVIPEESAQSIVFCILMLVYRYTVYHIHSDNGPCFIAQKVEALCKYLKITKTTGIPYNPQAQAIVERTHRDIKDKIAAFREDCETVEAALSLTLVALNKKRGGIGGHTPYEIYLESEYNKYQEQQNHYNNFKTEKWAYVRDKRKVWKGPYKVLWDGEGAAVVEENAMPTLYPHRHMRFIPPPNTDTQDGNL</sequence>